<dbReference type="EC" id="4.1.2.-" evidence="3"/>
<dbReference type="EMBL" id="CP000701">
    <property type="protein sequence ID" value="ABQ71648.1"/>
    <property type="molecule type" value="Genomic_DNA"/>
</dbReference>
<dbReference type="PDB" id="6R62">
    <property type="method" value="X-ray"/>
    <property type="resolution" value="1.55 A"/>
    <property type="chains" value="A=2-251"/>
</dbReference>
<dbReference type="PDB" id="7NNK">
    <property type="method" value="X-ray"/>
    <property type="resolution" value="1.80 A"/>
    <property type="chains" value="A/B=1-251"/>
</dbReference>
<dbReference type="PDB" id="7NR1">
    <property type="method" value="X-ray"/>
    <property type="resolution" value="2.30 A"/>
    <property type="chains" value="A/B=1-251"/>
</dbReference>
<dbReference type="PDB" id="7NUJ">
    <property type="method" value="X-ray"/>
    <property type="resolution" value="1.90 A"/>
    <property type="chains" value="A/B=1-251"/>
</dbReference>
<dbReference type="PDB" id="7O5I">
    <property type="method" value="X-ray"/>
    <property type="resolution" value="1.35 A"/>
    <property type="chains" value="A=1-251"/>
</dbReference>
<dbReference type="PDB" id="7O5R">
    <property type="method" value="X-ray"/>
    <property type="resolution" value="1.65 A"/>
    <property type="chains" value="A/B=1-251"/>
</dbReference>
<dbReference type="PDB" id="7O5V">
    <property type="method" value="X-ray"/>
    <property type="resolution" value="1.95 A"/>
    <property type="chains" value="A/B=2-250"/>
</dbReference>
<dbReference type="PDB" id="7O5W">
    <property type="method" value="X-ray"/>
    <property type="resolution" value="1.20 A"/>
    <property type="chains" value="A/B=2-250"/>
</dbReference>
<dbReference type="PDB" id="7O87">
    <property type="method" value="X-ray"/>
    <property type="resolution" value="1.50 A"/>
    <property type="chains" value="A/B=2-251"/>
</dbReference>
<dbReference type="PDB" id="7O9R">
    <property type="method" value="X-ray"/>
    <property type="resolution" value="1.85 A"/>
    <property type="chains" value="A/B=2-250"/>
</dbReference>
<dbReference type="PDB" id="7OBU">
    <property type="method" value="X-ray"/>
    <property type="resolution" value="1.20 A"/>
    <property type="chains" value="A/B=1-251"/>
</dbReference>
<dbReference type="PDB" id="8ADQ">
    <property type="method" value="X-ray"/>
    <property type="resolution" value="1.60 A"/>
    <property type="chains" value="A=2-251"/>
</dbReference>
<dbReference type="PDBsum" id="6R62"/>
<dbReference type="PDBsum" id="7NNK"/>
<dbReference type="PDBsum" id="7NR1"/>
<dbReference type="PDBsum" id="7NUJ"/>
<dbReference type="PDBsum" id="7O5I"/>
<dbReference type="PDBsum" id="7O5R"/>
<dbReference type="PDBsum" id="7O5V"/>
<dbReference type="PDBsum" id="7O5W"/>
<dbReference type="PDBsum" id="7O87"/>
<dbReference type="PDBsum" id="7O9R"/>
<dbReference type="PDBsum" id="7OBU"/>
<dbReference type="PDBsum" id="8ADQ"/>
<dbReference type="SMR" id="A0A9J9HGY6"/>
<dbReference type="KEGG" id="swi:Swit_5035"/>
<dbReference type="OrthoDB" id="9802624at2"/>
<dbReference type="Proteomes" id="UP000001989">
    <property type="component" value="Plasmid pSWIT02"/>
</dbReference>
<dbReference type="GO" id="GO:0005737">
    <property type="term" value="C:cytoplasm"/>
    <property type="evidence" value="ECO:0007669"/>
    <property type="project" value="TreeGrafter"/>
</dbReference>
<dbReference type="GO" id="GO:0016832">
    <property type="term" value="F:aldehyde-lyase activity"/>
    <property type="evidence" value="ECO:0007669"/>
    <property type="project" value="TreeGrafter"/>
</dbReference>
<dbReference type="GO" id="GO:0046872">
    <property type="term" value="F:metal ion binding"/>
    <property type="evidence" value="ECO:0007669"/>
    <property type="project" value="UniProtKB-KW"/>
</dbReference>
<dbReference type="Gene3D" id="3.20.20.60">
    <property type="entry name" value="Phosphoenolpyruvate-binding domains"/>
    <property type="match status" value="1"/>
</dbReference>
<dbReference type="InterPro" id="IPR005000">
    <property type="entry name" value="Aldolase/citrate-lyase_domain"/>
</dbReference>
<dbReference type="InterPro" id="IPR050251">
    <property type="entry name" value="HpcH-HpaI_aldolase"/>
</dbReference>
<dbReference type="InterPro" id="IPR015813">
    <property type="entry name" value="Pyrv/PenolPyrv_kinase-like_dom"/>
</dbReference>
<dbReference type="InterPro" id="IPR040442">
    <property type="entry name" value="Pyrv_kinase-like_dom_sf"/>
</dbReference>
<dbReference type="PANTHER" id="PTHR30502">
    <property type="entry name" value="2-KETO-3-DEOXY-L-RHAMNONATE ALDOLASE"/>
    <property type="match status" value="1"/>
</dbReference>
<dbReference type="PANTHER" id="PTHR30502:SF0">
    <property type="entry name" value="PHOSPHOENOLPYRUVATE CARBOXYLASE FAMILY PROTEIN"/>
    <property type="match status" value="1"/>
</dbReference>
<dbReference type="Pfam" id="PF03328">
    <property type="entry name" value="HpcH_HpaI"/>
    <property type="match status" value="1"/>
</dbReference>
<dbReference type="SUPFAM" id="SSF51621">
    <property type="entry name" value="Phosphoenolpyruvate/pyruvate domain"/>
    <property type="match status" value="1"/>
</dbReference>
<organism>
    <name type="scientific">Rhizorhabdus wittichii (strain DSM 6014 / CCUG 31198 / JCM 15750 / NBRC 105917 / EY 4224 / RW1)</name>
    <name type="common">Sphingomonas wittichii</name>
    <dbReference type="NCBI Taxonomy" id="392499"/>
    <lineage>
        <taxon>Bacteria</taxon>
        <taxon>Pseudomonadati</taxon>
        <taxon>Pseudomonadota</taxon>
        <taxon>Alphaproteobacteria</taxon>
        <taxon>Sphingomonadales</taxon>
        <taxon>Sphingomonadaceae</taxon>
        <taxon>Rhizorhabdus</taxon>
    </lineage>
</organism>
<reference key="1">
    <citation type="journal article" date="2010" name="J. Bacteriol.">
        <title>Genome sequence of the dioxin-mineralizing bacterium Sphingomonas wittichii RW1.</title>
        <authorList>
            <person name="Miller T.R."/>
            <person name="Delcher A.L."/>
            <person name="Salzberg S.L."/>
            <person name="Saunders E."/>
            <person name="Detter J.C."/>
            <person name="Halden R.U."/>
        </authorList>
    </citation>
    <scope>NUCLEOTIDE SEQUENCE [LARGE SCALE GENOMIC DNA]</scope>
    <source>
        <strain>DSM 6014 / CCUG 31198 / JCM 15750 / NBRC 105917 / EY 4224 / RW1</strain>
    </source>
</reference>
<reference key="2">
    <citation type="journal article" date="2017" name="Green Chem.">
        <title>Expanding the reaction space of aldolases using hydroxypyruvate as a nucleophilic substrate.</title>
        <authorList>
            <person name="de Berardinis V."/>
            <person name="Guerard-Helaine C."/>
            <person name="Darii E."/>
            <person name="Bastard K."/>
            <person name="Helaine V."/>
            <person name="Mariage A."/>
            <person name="Petit J.-L."/>
            <person name="Poupard N."/>
            <person name="Sanchez-Moreno I."/>
            <person name="Stam M."/>
            <person name="Gefflaut T."/>
            <person name="Salanoubat M."/>
            <person name="Lemaire M."/>
        </authorList>
    </citation>
    <scope>FUNCTION</scope>
    <scope>CATALYTIC ACTIVITY</scope>
    <scope>COFACTOR</scope>
    <scope>BIOTECHNOLOGY</scope>
</reference>
<reference evidence="10" key="3">
    <citation type="journal article" date="2019" name="Adv. Synth. Catal.">
        <title>CH-pi Interactions Promote the Conversion of Hydroxypyruvate in a Class II Pyruvate Aldolase.</title>
        <authorList>
            <person name="Marsden S.R."/>
            <person name="Mestrom L."/>
            <person name="Bento I."/>
            <person name="Hagedoorn P.L."/>
            <person name="McMillan D.G.G."/>
            <person name="Hanefeld U."/>
        </authorList>
    </citation>
    <scope>X-RAY CRYSTALLOGRAPHY (1.55 ANGSTROMS) OF 2-251 IN COMPLEX WITH HYDROXYPYRUVATE AND MG(2+)</scope>
    <scope>FUNCTION</scope>
    <scope>COFACTOR</scope>
    <scope>ACTIVITY REGULATION</scope>
    <scope>BIOPHYSICOCHEMICAL PROPERTIES</scope>
    <scope>SUBUNIT</scope>
    <scope>DOMAIN</scope>
    <scope>MUTAGENESIS OF HIS-44; ARG-69 AND PHE-210</scope>
</reference>
<reference evidence="11 12 13 14 15 16 17 18 19 20 21" key="4">
    <citation type="journal article" date="2022" name="Angew. Chem. Int. Ed.">
        <title>Substrate Induced Movement of the Metal Cofactor between Active and Resting State.</title>
        <authorList>
            <person name="Marsden S.R."/>
            <person name="Wijma H.J."/>
            <person name="Mohr M.K.F."/>
            <person name="Justo I."/>
            <person name="Hagedoorn P.L."/>
            <person name="Laustsen J."/>
            <person name="Jeffries C.M."/>
            <person name="Svergun D."/>
            <person name="Mestrom L."/>
            <person name="McMillan D.G.G."/>
            <person name="Bento I."/>
            <person name="Hanefeld U."/>
        </authorList>
    </citation>
    <scope>X-RAY CRYSTALLOGRAPHY (1.60 ANGSTROMS) OF 2-251 OF WILD-TYPE AND MUTANTS ALA-44; ALA-116 AND TRP-210 IN COMPLEXES WITH 3-HYDROXYPYRUVATE; GLYCERALDEHYDE; MG(2+) AND MN(2+)</scope>
    <scope>COFACTOR</scope>
    <scope>ACTIVITY REGULATION</scope>
    <scope>SUBUNIT</scope>
</reference>
<evidence type="ECO:0000250" key="1">
    <source>
        <dbReference type="UniProtKB" id="Q47098"/>
    </source>
</evidence>
<evidence type="ECO:0000269" key="2">
    <source>
    </source>
</evidence>
<evidence type="ECO:0000269" key="3">
    <source ref="2"/>
</evidence>
<evidence type="ECO:0000269" key="4">
    <source ref="3"/>
</evidence>
<evidence type="ECO:0000303" key="5">
    <source ref="2"/>
</evidence>
<evidence type="ECO:0000303" key="6">
    <source ref="3"/>
</evidence>
<evidence type="ECO:0000305" key="7"/>
<evidence type="ECO:0000305" key="8">
    <source ref="3"/>
</evidence>
<evidence type="ECO:0000312" key="9">
    <source>
        <dbReference type="EMBL" id="ABQ71648.1"/>
    </source>
</evidence>
<evidence type="ECO:0007744" key="10">
    <source>
        <dbReference type="PDB" id="6R62"/>
    </source>
</evidence>
<evidence type="ECO:0007744" key="11">
    <source>
        <dbReference type="PDB" id="7NNK"/>
    </source>
</evidence>
<evidence type="ECO:0007744" key="12">
    <source>
        <dbReference type="PDB" id="7NR1"/>
    </source>
</evidence>
<evidence type="ECO:0007744" key="13">
    <source>
        <dbReference type="PDB" id="7NUJ"/>
    </source>
</evidence>
<evidence type="ECO:0007744" key="14">
    <source>
        <dbReference type="PDB" id="7O5I"/>
    </source>
</evidence>
<evidence type="ECO:0007744" key="15">
    <source>
        <dbReference type="PDB" id="7O5R"/>
    </source>
</evidence>
<evidence type="ECO:0007744" key="16">
    <source>
        <dbReference type="PDB" id="7O5V"/>
    </source>
</evidence>
<evidence type="ECO:0007744" key="17">
    <source>
        <dbReference type="PDB" id="7O5W"/>
    </source>
</evidence>
<evidence type="ECO:0007744" key="18">
    <source>
        <dbReference type="PDB" id="7O87"/>
    </source>
</evidence>
<evidence type="ECO:0007744" key="19">
    <source>
        <dbReference type="PDB" id="7O9R"/>
    </source>
</evidence>
<evidence type="ECO:0007744" key="20">
    <source>
        <dbReference type="PDB" id="7OBU"/>
    </source>
</evidence>
<evidence type="ECO:0007744" key="21">
    <source>
        <dbReference type="PDB" id="8ADQ"/>
    </source>
</evidence>
<evidence type="ECO:0007829" key="22">
    <source>
        <dbReference type="PDB" id="8ADQ"/>
    </source>
</evidence>
<accession>A0A9J9HGY6</accession>
<accession>A0A9J4RF02</accession>
<accession>A0A9J4RF03</accession>
<accession>A0A9X9Z9X7</accession>
<accession>A0A9X9Z9Y0</accession>
<accession>A0A9X9Z9Y6</accession>
<name>HPAAL_RHIWR</name>
<feature type="chain" id="PRO_0000460956" description="Hydroxypyruvate/pyruvate aldolase">
    <location>
        <begin position="1"/>
        <end position="251"/>
    </location>
</feature>
<feature type="active site" description="Proton acceptor" evidence="1">
    <location>
        <position position="44"/>
    </location>
</feature>
<feature type="binding site" evidence="2 4 10 11 16 21">
    <location>
        <position position="69"/>
    </location>
    <ligand>
        <name>3-hydroxypyruvate</name>
        <dbReference type="ChEBI" id="CHEBI:17180"/>
    </ligand>
</feature>
<feature type="binding site" evidence="2 4 10 11 12 13 21">
    <location>
        <position position="145"/>
    </location>
    <ligand>
        <name>Mg(2+)</name>
        <dbReference type="ChEBI" id="CHEBI:18420"/>
    </ligand>
</feature>
<feature type="binding site" evidence="2 4 10 11 16 21">
    <location>
        <position position="170"/>
    </location>
    <ligand>
        <name>3-hydroxypyruvate</name>
        <dbReference type="ChEBI" id="CHEBI:17180"/>
    </ligand>
</feature>
<feature type="binding site" evidence="2 4 10 11 16 21">
    <location>
        <position position="171"/>
    </location>
    <ligand>
        <name>3-hydroxypyruvate</name>
        <dbReference type="ChEBI" id="CHEBI:17180"/>
    </ligand>
</feature>
<feature type="binding site" evidence="2 4 10 11 12 13 21">
    <location>
        <position position="171"/>
    </location>
    <ligand>
        <name>Mg(2+)</name>
        <dbReference type="ChEBI" id="CHEBI:18420"/>
    </ligand>
</feature>
<feature type="site" description="Transition state stabilizer" evidence="1">
    <location>
        <position position="69"/>
    </location>
</feature>
<feature type="site" description="Increases basicity of active site His" evidence="1">
    <location>
        <position position="83"/>
    </location>
</feature>
<feature type="site" description="Improves activity by CH-pi interactions" evidence="8">
    <location>
        <position position="210"/>
    </location>
</feature>
<feature type="mutagenesis site" description="Retains 40% of activity for the decarboxylation of oxaloacetate. 36-fold decrease in affinity towards phosphate." evidence="4">
    <original>H</original>
    <variation>A</variation>
    <location>
        <position position="44"/>
    </location>
</feature>
<feature type="mutagenesis site" description="Loss of decarboxylation activity." evidence="4">
    <original>R</original>
    <variation>A</variation>
    <location>
        <position position="69"/>
    </location>
</feature>
<feature type="mutagenesis site" description="Efficiently catalyzes the first step of the aldol reaction to generate the enol intermediate from hydroxypyruvate, but its configuration hinders subsequent C-C bond formation." evidence="4">
    <original>F</original>
    <variation>L</variation>
    <location>
        <position position="210"/>
    </location>
</feature>
<feature type="mutagenesis site" description="2-fold increased activity. Increases the electron density of the interacting aromatic system." evidence="4">
    <original>F</original>
    <variation>Y</variation>
    <location>
        <position position="210"/>
    </location>
</feature>
<feature type="helix" evidence="22">
    <location>
        <begin position="3"/>
        <end position="9"/>
    </location>
</feature>
<feature type="strand" evidence="22">
    <location>
        <begin position="14"/>
        <end position="19"/>
    </location>
</feature>
<feature type="helix" evidence="22">
    <location>
        <begin position="25"/>
        <end position="31"/>
    </location>
</feature>
<feature type="strand" evidence="22">
    <location>
        <begin position="36"/>
        <end position="46"/>
    </location>
</feature>
<feature type="helix" evidence="22">
    <location>
        <begin position="49"/>
        <end position="62"/>
    </location>
</feature>
<feature type="strand" evidence="22">
    <location>
        <begin position="64"/>
        <end position="69"/>
    </location>
</feature>
<feature type="helix" evidence="22">
    <location>
        <begin position="75"/>
        <end position="83"/>
    </location>
</feature>
<feature type="strand" evidence="22">
    <location>
        <begin position="88"/>
        <end position="92"/>
    </location>
</feature>
<feature type="helix" evidence="22">
    <location>
        <begin position="97"/>
        <end position="107"/>
    </location>
</feature>
<feature type="turn" evidence="22">
    <location>
        <begin position="110"/>
        <end position="112"/>
    </location>
</feature>
<feature type="helix" evidence="22">
    <location>
        <begin position="120"/>
        <end position="126"/>
    </location>
</feature>
<feature type="helix" evidence="22">
    <location>
        <begin position="127"/>
        <end position="129"/>
    </location>
</feature>
<feature type="helix" evidence="22">
    <location>
        <begin position="130"/>
        <end position="133"/>
    </location>
</feature>
<feature type="helix" evidence="22">
    <location>
        <begin position="134"/>
        <end position="137"/>
    </location>
</feature>
<feature type="strand" evidence="22">
    <location>
        <begin position="139"/>
        <end position="144"/>
    </location>
</feature>
<feature type="helix" evidence="22">
    <location>
        <begin position="147"/>
        <end position="151"/>
    </location>
</feature>
<feature type="helix" evidence="22">
    <location>
        <begin position="153"/>
        <end position="157"/>
    </location>
</feature>
<feature type="strand" evidence="22">
    <location>
        <begin position="164"/>
        <end position="167"/>
    </location>
</feature>
<feature type="helix" evidence="22">
    <location>
        <begin position="169"/>
        <end position="175"/>
    </location>
</feature>
<feature type="helix" evidence="22">
    <location>
        <begin position="187"/>
        <end position="202"/>
    </location>
</feature>
<feature type="strand" evidence="22">
    <location>
        <begin position="206"/>
        <end position="210"/>
    </location>
</feature>
<feature type="helix" evidence="22">
    <location>
        <begin position="214"/>
        <end position="223"/>
    </location>
</feature>
<feature type="strand" evidence="22">
    <location>
        <begin position="226"/>
        <end position="232"/>
    </location>
</feature>
<feature type="helix" evidence="22">
    <location>
        <begin position="233"/>
        <end position="249"/>
    </location>
</feature>
<geneLocation type="plasmid" evidence="9">
    <name>pSWIT02</name>
</geneLocation>
<comment type="function">
    <text evidence="3 4">Aldolase which can catalyze in vitro the aldolisation reaction between hydroxypyruvate (HPA) or pyruvate (PA) and D-glyceraldehyde (D-GA) (Ref.2). The condensation of hydroxypyruvate and D-glyceraldehyde produces 2-dehydro-D-galactonate as the major product (Ref.2). The condensation of pyruvate and D-glyceraldehyde produces 2-dehydro-3-deoxy-L-galactonate (Ref.2). Can use other electrophilic substrates such as L-glyceraldehyde, D- and L-lactaldehyde and D-erythrose (Ref.2). Also catalyzes the retro-aldol type decarboxylation of oxaloacetate, a general property of known pyruvate aldolases (Ref.2, Ref.3).</text>
</comment>
<comment type="catalytic activity">
    <reaction evidence="3">
        <text>D-glyceraldehyde + 3-hydroxypyruvate = 2-dehydro-D-galactonate</text>
        <dbReference type="Rhea" id="RHEA:80051"/>
        <dbReference type="ChEBI" id="CHEBI:17180"/>
        <dbReference type="ChEBI" id="CHEBI:17378"/>
        <dbReference type="ChEBI" id="CHEBI:28023"/>
    </reaction>
</comment>
<comment type="catalytic activity">
    <reaction evidence="3">
        <text>D-glyceraldehyde + pyruvate = 2-dehydro-3-deoxy-L-galactonate</text>
        <dbReference type="Rhea" id="RHEA:80055"/>
        <dbReference type="ChEBI" id="CHEBI:15361"/>
        <dbReference type="ChEBI" id="CHEBI:17378"/>
        <dbReference type="ChEBI" id="CHEBI:75545"/>
    </reaction>
</comment>
<comment type="catalytic activity">
    <reaction evidence="3">
        <text>L-glyceraldehyde + 3-hydroxypyruvate = (3S,4S,5S)-3,4,5,6-tetrahydroxy-2-oxohexanoate</text>
        <dbReference type="Rhea" id="RHEA:80059"/>
        <dbReference type="ChEBI" id="CHEBI:17180"/>
        <dbReference type="ChEBI" id="CHEBI:27975"/>
        <dbReference type="ChEBI" id="CHEBI:231435"/>
    </reaction>
</comment>
<comment type="catalytic activity">
    <reaction evidence="3">
        <text>(R)-lactaldehyde + 3-hydroxypyruvate = (3S,4S,5R)-3,4,5-trihydroxy-2-oxohexanoate</text>
        <dbReference type="Rhea" id="RHEA:80063"/>
        <dbReference type="ChEBI" id="CHEBI:17167"/>
        <dbReference type="ChEBI" id="CHEBI:17180"/>
        <dbReference type="ChEBI" id="CHEBI:231436"/>
    </reaction>
</comment>
<comment type="catalytic activity">
    <reaction evidence="3">
        <text>(R)-lactaldehyde + 3-hydroxypyruvate = (3S,4R,5R)-3,4,5-trihydroxy-2-oxohexanoate</text>
        <dbReference type="Rhea" id="RHEA:80067"/>
        <dbReference type="ChEBI" id="CHEBI:17167"/>
        <dbReference type="ChEBI" id="CHEBI:17180"/>
        <dbReference type="ChEBI" id="CHEBI:231437"/>
    </reaction>
</comment>
<comment type="catalytic activity">
    <reaction evidence="3">
        <text>(S)-lactaldehyde + 3-hydroxypyruvate = (3S,4S,5S)-3,4,5-trihydroxy-2-oxohexanoate</text>
        <dbReference type="Rhea" id="RHEA:80071"/>
        <dbReference type="ChEBI" id="CHEBI:17180"/>
        <dbReference type="ChEBI" id="CHEBI:18041"/>
        <dbReference type="ChEBI" id="CHEBI:231438"/>
    </reaction>
</comment>
<comment type="catalytic activity">
    <reaction evidence="3">
        <text>D-erythrose + 3-hydroxypyruvate = (3S,4S,5R,6R)-3,4,5,6,7-pentahydroxy-2-oxoheptanoate</text>
        <dbReference type="Rhea" id="RHEA:80075"/>
        <dbReference type="ChEBI" id="CHEBI:17180"/>
        <dbReference type="ChEBI" id="CHEBI:27904"/>
        <dbReference type="ChEBI" id="CHEBI:231439"/>
    </reaction>
</comment>
<comment type="cofactor">
    <cofactor evidence="2 3 4">
        <name>Mn(2+)</name>
        <dbReference type="ChEBI" id="CHEBI:29035"/>
    </cofactor>
    <cofactor evidence="2 3 4">
        <name>Mg(2+)</name>
        <dbReference type="ChEBI" id="CHEBI:18420"/>
    </cofactor>
    <cofactor evidence="3 4">
        <name>Co(2+)</name>
        <dbReference type="ChEBI" id="CHEBI:48828"/>
    </cofactor>
    <cofactor evidence="4">
        <name>Zn(2+)</name>
        <dbReference type="ChEBI" id="CHEBI:29105"/>
    </cofactor>
    <text evidence="3 4">Shows a slight preference for Mn(2+), followed by Mg(2+).</text>
</comment>
<comment type="activity regulation">
    <text evidence="2 4">Binding of substrate induces a dynamic movement of the metal cofactor between an inactive coordination sphere to a catalytically active one (PubMed:36214476). When oxaloacetate is used as substrate, activity is increased in the presence of micromolar concentrations of inorganic phosphate (Ref.3). The phosphate does not improve the binding of the substrate, but exclusively increases its rate of decarboxylation (Ref.3). Excessive phosphate concentrations negatively affect the reaction rate by removing the metal cofactor (Ref.3).</text>
</comment>
<comment type="biophysicochemical properties">
    <phDependence>
        <text evidence="4">Optimum pH is 6.75.</text>
    </phDependence>
</comment>
<comment type="subunit">
    <text evidence="2 4">Homohexamer (PubMed:36214476, Ref.3). Trimer of homodimers (PubMed:36214476).</text>
</comment>
<comment type="domain">
    <text evidence="4">CH-pi interactions between Phe-210 and the C-H bonds at C3 of hydroxypyruvate are probably responsible for its efficient conversion.</text>
</comment>
<comment type="biotechnology">
    <text evidence="3">Could be used as a biocatalytic tool to prepare (3S,4S) aldol adducts through an eco-friendly process.</text>
</comment>
<comment type="similarity">
    <text evidence="7">Belongs to the HpcH/HpaI aldolase family.</text>
</comment>
<sequence length="251" mass="26612">MNKVRTCWNEGRPALAGWLQLPGTLHAEALARLDYDAVVIDMQHSPIDFGQVAPMLIAIELGGAEPFVRTQVNDPSDIMKLLDAGAYGIIAPMVNTRAEAQTLASALHYSPRGLRSFGPRRPSLRYGSGYLAQASETVVGLAMIETREALANIDEILSVDGIDGVFIGPTDLALDLGHAPLVDTEEAEVVSAIAHVRERAHAAGKRVGIFCGSGGFARVKLAEGFDFVTAAPDLAMLSAAARQVIADARAL</sequence>
<gene>
    <name evidence="9" type="ordered locus">Swit_5035</name>
</gene>
<keyword id="KW-0002">3D-structure</keyword>
<keyword id="KW-0170">Cobalt</keyword>
<keyword id="KW-0456">Lyase</keyword>
<keyword id="KW-0460">Magnesium</keyword>
<keyword id="KW-0464">Manganese</keyword>
<keyword id="KW-0479">Metal-binding</keyword>
<keyword id="KW-0614">Plasmid</keyword>
<keyword id="KW-0670">Pyruvate</keyword>
<keyword id="KW-1185">Reference proteome</keyword>
<keyword id="KW-0862">Zinc</keyword>
<protein>
    <recommendedName>
        <fullName evidence="5">Hydroxypyruvate/pyruvate aldolase</fullName>
        <shortName evidence="5">HPA/PA aldolase</shortName>
        <ecNumber evidence="3">4.1.2.-</ecNumber>
    </recommendedName>
    <alternativeName>
        <fullName evidence="6">Hydroxy ketoacid aldolase</fullName>
    </alternativeName>
    <alternativeName>
        <fullName evidence="6">SwHKA</fullName>
    </alternativeName>
</protein>
<proteinExistence type="evidence at protein level"/>